<organism>
    <name type="scientific">Escherichia coli O8 (strain IAI1)</name>
    <dbReference type="NCBI Taxonomy" id="585034"/>
    <lineage>
        <taxon>Bacteria</taxon>
        <taxon>Pseudomonadati</taxon>
        <taxon>Pseudomonadota</taxon>
        <taxon>Gammaproteobacteria</taxon>
        <taxon>Enterobacterales</taxon>
        <taxon>Enterobacteriaceae</taxon>
        <taxon>Escherichia</taxon>
    </lineage>
</organism>
<dbReference type="EC" id="2.1.1.144" evidence="1"/>
<dbReference type="EMBL" id="CU928160">
    <property type="protein sequence ID" value="CAQ98388.1"/>
    <property type="molecule type" value="Genomic_DNA"/>
</dbReference>
<dbReference type="RefSeq" id="WP_001286566.1">
    <property type="nucleotide sequence ID" value="NC_011741.1"/>
</dbReference>
<dbReference type="SMR" id="B7LZC1"/>
<dbReference type="KEGG" id="ecr:ECIAI1_1531"/>
<dbReference type="HOGENOM" id="CLU_037990_5_2_6"/>
<dbReference type="GO" id="GO:0005737">
    <property type="term" value="C:cytoplasm"/>
    <property type="evidence" value="ECO:0007669"/>
    <property type="project" value="UniProtKB-SubCell"/>
</dbReference>
<dbReference type="GO" id="GO:0030798">
    <property type="term" value="F:trans-aconitate 2-methyltransferase activity"/>
    <property type="evidence" value="ECO:0007669"/>
    <property type="project" value="UniProtKB-UniRule"/>
</dbReference>
<dbReference type="GO" id="GO:0032259">
    <property type="term" value="P:methylation"/>
    <property type="evidence" value="ECO:0007669"/>
    <property type="project" value="UniProtKB-KW"/>
</dbReference>
<dbReference type="CDD" id="cd02440">
    <property type="entry name" value="AdoMet_MTases"/>
    <property type="match status" value="1"/>
</dbReference>
<dbReference type="Gene3D" id="1.10.150.290">
    <property type="entry name" value="S-adenosyl-L-methionine-dependent methyltransferases"/>
    <property type="match status" value="1"/>
</dbReference>
<dbReference type="Gene3D" id="3.40.50.150">
    <property type="entry name" value="Vaccinia Virus protein VP39"/>
    <property type="match status" value="1"/>
</dbReference>
<dbReference type="HAMAP" id="MF_00560">
    <property type="entry name" value="Tran_acon_Me_trans"/>
    <property type="match status" value="1"/>
</dbReference>
<dbReference type="InterPro" id="IPR041698">
    <property type="entry name" value="Methyltransf_25"/>
</dbReference>
<dbReference type="InterPro" id="IPR029063">
    <property type="entry name" value="SAM-dependent_MTases_sf"/>
</dbReference>
<dbReference type="InterPro" id="IPR023506">
    <property type="entry name" value="Trans-aconitate_MeTrfase"/>
</dbReference>
<dbReference type="InterPro" id="IPR023149">
    <property type="entry name" value="Trans_acon_MeTrfase_C"/>
</dbReference>
<dbReference type="NCBIfam" id="NF002463">
    <property type="entry name" value="PRK01683.1"/>
    <property type="match status" value="1"/>
</dbReference>
<dbReference type="PANTHER" id="PTHR43861:SF1">
    <property type="entry name" value="TRANS-ACONITATE 2-METHYLTRANSFERASE"/>
    <property type="match status" value="1"/>
</dbReference>
<dbReference type="PANTHER" id="PTHR43861">
    <property type="entry name" value="TRANS-ACONITATE 2-METHYLTRANSFERASE-RELATED"/>
    <property type="match status" value="1"/>
</dbReference>
<dbReference type="Pfam" id="PF13649">
    <property type="entry name" value="Methyltransf_25"/>
    <property type="match status" value="1"/>
</dbReference>
<dbReference type="SUPFAM" id="SSF53335">
    <property type="entry name" value="S-adenosyl-L-methionine-dependent methyltransferases"/>
    <property type="match status" value="1"/>
</dbReference>
<protein>
    <recommendedName>
        <fullName evidence="1">Trans-aconitate 2-methyltransferase</fullName>
        <ecNumber evidence="1">2.1.1.144</ecNumber>
    </recommendedName>
</protein>
<keyword id="KW-0963">Cytoplasm</keyword>
<keyword id="KW-0489">Methyltransferase</keyword>
<keyword id="KW-0949">S-adenosyl-L-methionine</keyword>
<keyword id="KW-0808">Transferase</keyword>
<comment type="function">
    <text evidence="1">Catalyzes the S-adenosylmethionine monomethyl esterification of trans-aconitate.</text>
</comment>
<comment type="catalytic activity">
    <reaction evidence="1">
        <text>trans-aconitate + S-adenosyl-L-methionine = (E)-3-(methoxycarbonyl)pent-2-enedioate + S-adenosyl-L-homocysteine</text>
        <dbReference type="Rhea" id="RHEA:14969"/>
        <dbReference type="ChEBI" id="CHEBI:15708"/>
        <dbReference type="ChEBI" id="CHEBI:57470"/>
        <dbReference type="ChEBI" id="CHEBI:57856"/>
        <dbReference type="ChEBI" id="CHEBI:59789"/>
        <dbReference type="EC" id="2.1.1.144"/>
    </reaction>
</comment>
<comment type="subcellular location">
    <subcellularLocation>
        <location evidence="1">Cytoplasm</location>
    </subcellularLocation>
</comment>
<comment type="similarity">
    <text evidence="1">Belongs to the methyltransferase superfamily. Tam family.</text>
</comment>
<proteinExistence type="inferred from homology"/>
<sequence length="252" mass="29042">MSDWNPSLYLHFAAERSRPAVELLARVPLENIKYVADLGCGPGNSTALLHQRWPAARITGIDSSPAMIAEARSALPDCQFVEADIRNWQPEQALDLIFANASLQWLPDHYELFPHLVSLLNPQGVLAVQMPDNWLEPTHVLMREVAWEQNYPDRGREPLAGVHAYYDILSEAGCEVDIWRTTYYHQMPSHQAIIDWVTATGLRPWLQDLTESEQQLFLKRYHQMLEEQYPLQENGQILLAFPRLFIVARRME</sequence>
<evidence type="ECO:0000255" key="1">
    <source>
        <dbReference type="HAMAP-Rule" id="MF_00560"/>
    </source>
</evidence>
<feature type="chain" id="PRO_1000129253" description="Trans-aconitate 2-methyltransferase">
    <location>
        <begin position="1"/>
        <end position="252"/>
    </location>
</feature>
<reference key="1">
    <citation type="journal article" date="2009" name="PLoS Genet.">
        <title>Organised genome dynamics in the Escherichia coli species results in highly diverse adaptive paths.</title>
        <authorList>
            <person name="Touchon M."/>
            <person name="Hoede C."/>
            <person name="Tenaillon O."/>
            <person name="Barbe V."/>
            <person name="Baeriswyl S."/>
            <person name="Bidet P."/>
            <person name="Bingen E."/>
            <person name="Bonacorsi S."/>
            <person name="Bouchier C."/>
            <person name="Bouvet O."/>
            <person name="Calteau A."/>
            <person name="Chiapello H."/>
            <person name="Clermont O."/>
            <person name="Cruveiller S."/>
            <person name="Danchin A."/>
            <person name="Diard M."/>
            <person name="Dossat C."/>
            <person name="Karoui M.E."/>
            <person name="Frapy E."/>
            <person name="Garry L."/>
            <person name="Ghigo J.M."/>
            <person name="Gilles A.M."/>
            <person name="Johnson J."/>
            <person name="Le Bouguenec C."/>
            <person name="Lescat M."/>
            <person name="Mangenot S."/>
            <person name="Martinez-Jehanne V."/>
            <person name="Matic I."/>
            <person name="Nassif X."/>
            <person name="Oztas S."/>
            <person name="Petit M.A."/>
            <person name="Pichon C."/>
            <person name="Rouy Z."/>
            <person name="Ruf C.S."/>
            <person name="Schneider D."/>
            <person name="Tourret J."/>
            <person name="Vacherie B."/>
            <person name="Vallenet D."/>
            <person name="Medigue C."/>
            <person name="Rocha E.P.C."/>
            <person name="Denamur E."/>
        </authorList>
    </citation>
    <scope>NUCLEOTIDE SEQUENCE [LARGE SCALE GENOMIC DNA]</scope>
    <source>
        <strain>IAI1</strain>
    </source>
</reference>
<name>TAM_ECO8A</name>
<gene>
    <name evidence="1" type="primary">tam</name>
    <name type="ordered locus">ECIAI1_1531</name>
</gene>
<accession>B7LZC1</accession>